<organism>
    <name type="scientific">Nocardioides sp. (strain ATCC BAA-499 / JS614)</name>
    <dbReference type="NCBI Taxonomy" id="196162"/>
    <lineage>
        <taxon>Bacteria</taxon>
        <taxon>Bacillati</taxon>
        <taxon>Actinomycetota</taxon>
        <taxon>Actinomycetes</taxon>
        <taxon>Propionibacteriales</taxon>
        <taxon>Nocardioidaceae</taxon>
        <taxon>Nocardioides</taxon>
    </lineage>
</organism>
<gene>
    <name evidence="1" type="primary">gltX</name>
    <name type="ordered locus">Noca_3336</name>
</gene>
<sequence length="491" mass="54814">MNNQPKTVRVRMAPSPTGSPHVGLVRTALFNWAFARHHHGTFVFRIEDTDRERSTQESYDAIIDLMRWLGLDWDEGPEVGGPHAPYFQSERGDIYRDALARLAESSYTYDCFCTNEEVDARRKASGSKVMGYDGFCRDLSTEQRAAFEAEGRRPVVRFRMPDGSITWHDLVRGDVTFETRFVPDYALCRANGDPLYTLVNPVDDAYMEITHVLRGEDLLSSTPRQIALYAALEELGIAKATPEFGHLPYVMGEGNKKLSKRDPEAHALAYRDQGFLPEGLLNYLALLGWAIAADRDVFSMEEMVAAFDIADVNPNPARFDMKKAEAINAAHMRLLSLDVMTERVLPFLKGAGVLSDPVNPADTQLLELAMPLVAERINKLTESVDMLGFLFVDEESFTRDEADAEKLLNDDGRAVVRRALDALERVGEWSTGAIQDALQAELVEAMGVKPRNAFGPVRVAVTGRRVSPPLFESMELLGRDRSLARLRSALG</sequence>
<accession>A1SM03</accession>
<evidence type="ECO:0000255" key="1">
    <source>
        <dbReference type="HAMAP-Rule" id="MF_00022"/>
    </source>
</evidence>
<keyword id="KW-0030">Aminoacyl-tRNA synthetase</keyword>
<keyword id="KW-0067">ATP-binding</keyword>
<keyword id="KW-0963">Cytoplasm</keyword>
<keyword id="KW-0436">Ligase</keyword>
<keyword id="KW-0479">Metal-binding</keyword>
<keyword id="KW-0547">Nucleotide-binding</keyword>
<keyword id="KW-0648">Protein biosynthesis</keyword>
<keyword id="KW-1185">Reference proteome</keyword>
<keyword id="KW-0862">Zinc</keyword>
<comment type="function">
    <text evidence="1">Catalyzes the attachment of glutamate to tRNA(Glu) in a two-step reaction: glutamate is first activated by ATP to form Glu-AMP and then transferred to the acceptor end of tRNA(Glu).</text>
</comment>
<comment type="catalytic activity">
    <reaction evidence="1">
        <text>tRNA(Glu) + L-glutamate + ATP = L-glutamyl-tRNA(Glu) + AMP + diphosphate</text>
        <dbReference type="Rhea" id="RHEA:23540"/>
        <dbReference type="Rhea" id="RHEA-COMP:9663"/>
        <dbReference type="Rhea" id="RHEA-COMP:9680"/>
        <dbReference type="ChEBI" id="CHEBI:29985"/>
        <dbReference type="ChEBI" id="CHEBI:30616"/>
        <dbReference type="ChEBI" id="CHEBI:33019"/>
        <dbReference type="ChEBI" id="CHEBI:78442"/>
        <dbReference type="ChEBI" id="CHEBI:78520"/>
        <dbReference type="ChEBI" id="CHEBI:456215"/>
        <dbReference type="EC" id="6.1.1.17"/>
    </reaction>
</comment>
<comment type="cofactor">
    <cofactor evidence="1">
        <name>Zn(2+)</name>
        <dbReference type="ChEBI" id="CHEBI:29105"/>
    </cofactor>
    <text evidence="1">Binds 1 zinc ion per subunit.</text>
</comment>
<comment type="subunit">
    <text evidence="1">Monomer.</text>
</comment>
<comment type="subcellular location">
    <subcellularLocation>
        <location evidence="1">Cytoplasm</location>
    </subcellularLocation>
</comment>
<comment type="similarity">
    <text evidence="1">Belongs to the class-I aminoacyl-tRNA synthetase family. Glutamate--tRNA ligase type 1 subfamily.</text>
</comment>
<feature type="chain" id="PRO_0000330986" description="Glutamate--tRNA ligase">
    <location>
        <begin position="1"/>
        <end position="491"/>
    </location>
</feature>
<feature type="short sequence motif" description="'HIGH' region" evidence="1">
    <location>
        <begin position="14"/>
        <end position="24"/>
    </location>
</feature>
<feature type="short sequence motif" description="'KMSKS' region" evidence="1">
    <location>
        <begin position="257"/>
        <end position="261"/>
    </location>
</feature>
<feature type="binding site" evidence="1">
    <location>
        <position position="111"/>
    </location>
    <ligand>
        <name>Zn(2+)</name>
        <dbReference type="ChEBI" id="CHEBI:29105"/>
    </ligand>
</feature>
<feature type="binding site" evidence="1">
    <location>
        <position position="113"/>
    </location>
    <ligand>
        <name>Zn(2+)</name>
        <dbReference type="ChEBI" id="CHEBI:29105"/>
    </ligand>
</feature>
<feature type="binding site" evidence="1">
    <location>
        <position position="136"/>
    </location>
    <ligand>
        <name>Zn(2+)</name>
        <dbReference type="ChEBI" id="CHEBI:29105"/>
    </ligand>
</feature>
<feature type="binding site" evidence="1">
    <location>
        <position position="138"/>
    </location>
    <ligand>
        <name>Zn(2+)</name>
        <dbReference type="ChEBI" id="CHEBI:29105"/>
    </ligand>
</feature>
<feature type="binding site" evidence="1">
    <location>
        <position position="260"/>
    </location>
    <ligand>
        <name>ATP</name>
        <dbReference type="ChEBI" id="CHEBI:30616"/>
    </ligand>
</feature>
<reference key="1">
    <citation type="submission" date="2006-12" db="EMBL/GenBank/DDBJ databases">
        <title>Complete sequence of chromosome 1 of Nocardioides sp. JS614.</title>
        <authorList>
            <person name="Copeland A."/>
            <person name="Lucas S."/>
            <person name="Lapidus A."/>
            <person name="Barry K."/>
            <person name="Detter J.C."/>
            <person name="Glavina del Rio T."/>
            <person name="Hammon N."/>
            <person name="Israni S."/>
            <person name="Dalin E."/>
            <person name="Tice H."/>
            <person name="Pitluck S."/>
            <person name="Thompson L.S."/>
            <person name="Brettin T."/>
            <person name="Bruce D."/>
            <person name="Han C."/>
            <person name="Tapia R."/>
            <person name="Schmutz J."/>
            <person name="Larimer F."/>
            <person name="Land M."/>
            <person name="Hauser L."/>
            <person name="Kyrpides N."/>
            <person name="Kim E."/>
            <person name="Mattes T."/>
            <person name="Gossett J."/>
            <person name="Richardson P."/>
        </authorList>
    </citation>
    <scope>NUCLEOTIDE SEQUENCE [LARGE SCALE GENOMIC DNA]</scope>
    <source>
        <strain>ATCC BAA-499 / JS614</strain>
    </source>
</reference>
<name>SYE_NOCSJ</name>
<protein>
    <recommendedName>
        <fullName evidence="1">Glutamate--tRNA ligase</fullName>
        <ecNumber evidence="1">6.1.1.17</ecNumber>
    </recommendedName>
    <alternativeName>
        <fullName evidence="1">Glutamyl-tRNA synthetase</fullName>
        <shortName evidence="1">GluRS</shortName>
    </alternativeName>
</protein>
<dbReference type="EC" id="6.1.1.17" evidence="1"/>
<dbReference type="EMBL" id="CP000509">
    <property type="protein sequence ID" value="ABL82838.1"/>
    <property type="molecule type" value="Genomic_DNA"/>
</dbReference>
<dbReference type="SMR" id="A1SM03"/>
<dbReference type="STRING" id="196162.Noca_3336"/>
<dbReference type="KEGG" id="nca:Noca_3336"/>
<dbReference type="eggNOG" id="COG0008">
    <property type="taxonomic scope" value="Bacteria"/>
</dbReference>
<dbReference type="eggNOG" id="COG1384">
    <property type="taxonomic scope" value="Bacteria"/>
</dbReference>
<dbReference type="HOGENOM" id="CLU_015768_6_3_11"/>
<dbReference type="OrthoDB" id="9807503at2"/>
<dbReference type="Proteomes" id="UP000000640">
    <property type="component" value="Chromosome"/>
</dbReference>
<dbReference type="GO" id="GO:0005829">
    <property type="term" value="C:cytosol"/>
    <property type="evidence" value="ECO:0007669"/>
    <property type="project" value="TreeGrafter"/>
</dbReference>
<dbReference type="GO" id="GO:0005524">
    <property type="term" value="F:ATP binding"/>
    <property type="evidence" value="ECO:0007669"/>
    <property type="project" value="UniProtKB-UniRule"/>
</dbReference>
<dbReference type="GO" id="GO:0004818">
    <property type="term" value="F:glutamate-tRNA ligase activity"/>
    <property type="evidence" value="ECO:0007669"/>
    <property type="project" value="UniProtKB-UniRule"/>
</dbReference>
<dbReference type="GO" id="GO:0000049">
    <property type="term" value="F:tRNA binding"/>
    <property type="evidence" value="ECO:0007669"/>
    <property type="project" value="InterPro"/>
</dbReference>
<dbReference type="GO" id="GO:0008270">
    <property type="term" value="F:zinc ion binding"/>
    <property type="evidence" value="ECO:0007669"/>
    <property type="project" value="UniProtKB-UniRule"/>
</dbReference>
<dbReference type="GO" id="GO:0006424">
    <property type="term" value="P:glutamyl-tRNA aminoacylation"/>
    <property type="evidence" value="ECO:0007669"/>
    <property type="project" value="UniProtKB-UniRule"/>
</dbReference>
<dbReference type="CDD" id="cd00808">
    <property type="entry name" value="GluRS_core"/>
    <property type="match status" value="1"/>
</dbReference>
<dbReference type="FunFam" id="3.40.50.620:FF:000149">
    <property type="entry name" value="Glutamate--tRNA ligase"/>
    <property type="match status" value="1"/>
</dbReference>
<dbReference type="Gene3D" id="1.10.10.350">
    <property type="match status" value="1"/>
</dbReference>
<dbReference type="Gene3D" id="1.10.8.70">
    <property type="entry name" value="Glutamate-tRNA synthetase, class I, anticodon-binding domain 1"/>
    <property type="match status" value="1"/>
</dbReference>
<dbReference type="Gene3D" id="3.40.50.620">
    <property type="entry name" value="HUPs"/>
    <property type="match status" value="1"/>
</dbReference>
<dbReference type="HAMAP" id="MF_00022">
    <property type="entry name" value="Glu_tRNA_synth_type1"/>
    <property type="match status" value="1"/>
</dbReference>
<dbReference type="InterPro" id="IPR045462">
    <property type="entry name" value="aa-tRNA-synth_I_cd-bd"/>
</dbReference>
<dbReference type="InterPro" id="IPR020751">
    <property type="entry name" value="aa-tRNA-synth_I_codon-bd_sub2"/>
</dbReference>
<dbReference type="InterPro" id="IPR008925">
    <property type="entry name" value="aa_tRNA-synth_I_cd-bd_sf"/>
</dbReference>
<dbReference type="InterPro" id="IPR004527">
    <property type="entry name" value="Glu-tRNA-ligase_bac/mito"/>
</dbReference>
<dbReference type="InterPro" id="IPR020752">
    <property type="entry name" value="Glu-tRNA-synth_I_codon-bd_sub1"/>
</dbReference>
<dbReference type="InterPro" id="IPR000924">
    <property type="entry name" value="Glu/Gln-tRNA-synth"/>
</dbReference>
<dbReference type="InterPro" id="IPR020058">
    <property type="entry name" value="Glu/Gln-tRNA-synth_Ib_cat-dom"/>
</dbReference>
<dbReference type="InterPro" id="IPR049940">
    <property type="entry name" value="GluQ/Sye"/>
</dbReference>
<dbReference type="InterPro" id="IPR033910">
    <property type="entry name" value="GluRS_core"/>
</dbReference>
<dbReference type="InterPro" id="IPR014729">
    <property type="entry name" value="Rossmann-like_a/b/a_fold"/>
</dbReference>
<dbReference type="NCBIfam" id="TIGR00464">
    <property type="entry name" value="gltX_bact"/>
    <property type="match status" value="1"/>
</dbReference>
<dbReference type="PANTHER" id="PTHR43311">
    <property type="entry name" value="GLUTAMATE--TRNA LIGASE"/>
    <property type="match status" value="1"/>
</dbReference>
<dbReference type="PANTHER" id="PTHR43311:SF2">
    <property type="entry name" value="GLUTAMATE--TRNA LIGASE, MITOCHONDRIAL-RELATED"/>
    <property type="match status" value="1"/>
</dbReference>
<dbReference type="Pfam" id="PF19269">
    <property type="entry name" value="Anticodon_2"/>
    <property type="match status" value="1"/>
</dbReference>
<dbReference type="Pfam" id="PF00749">
    <property type="entry name" value="tRNA-synt_1c"/>
    <property type="match status" value="1"/>
</dbReference>
<dbReference type="PRINTS" id="PR00987">
    <property type="entry name" value="TRNASYNTHGLU"/>
</dbReference>
<dbReference type="SUPFAM" id="SSF48163">
    <property type="entry name" value="An anticodon-binding domain of class I aminoacyl-tRNA synthetases"/>
    <property type="match status" value="1"/>
</dbReference>
<dbReference type="SUPFAM" id="SSF52374">
    <property type="entry name" value="Nucleotidylyl transferase"/>
    <property type="match status" value="1"/>
</dbReference>
<proteinExistence type="inferred from homology"/>